<feature type="chain" id="PRO_0000351871" description="Protein-L-isoaspartate O-methyltransferase">
    <location>
        <begin position="1"/>
        <end position="226"/>
    </location>
</feature>
<feature type="active site" evidence="1">
    <location>
        <position position="75"/>
    </location>
</feature>
<reference key="1">
    <citation type="submission" date="2005-11" db="EMBL/GenBank/DDBJ databases">
        <title>The complete genome sequence of Lawsonia intracellularis: the causative agent of proliferative enteropathy.</title>
        <authorList>
            <person name="Kaur K."/>
            <person name="Zhang Q."/>
            <person name="Beckler D."/>
            <person name="Munir S."/>
            <person name="Li L."/>
            <person name="Kinsley K."/>
            <person name="Herron L."/>
            <person name="Peterson A."/>
            <person name="May B."/>
            <person name="Singh S."/>
            <person name="Gebhart C."/>
            <person name="Kapur V."/>
        </authorList>
    </citation>
    <scope>NUCLEOTIDE SEQUENCE [LARGE SCALE GENOMIC DNA]</scope>
    <source>
        <strain>PHE/MN1-00</strain>
    </source>
</reference>
<sequence>MLRYHTSKNNFPLASDLRRQRERMVITQLEQRGITNSYVLTAMRNVHRHLFVPEALQSRAYDDYPLPIGYGQTISRPYIVAIMTSLLEPTPGLSVLEIGTGSGYQTAILANIGLEVFSLERVRELYFQTKELFFLLGYRKIRTCLSDGTLGWEEHAPFDRIIVTAGGPNIPLPLLNQLGDPGVMVIPVGQNPREQELMCITKKNNTVTSTVIGNVAFVDLVGDYGW</sequence>
<comment type="function">
    <text evidence="1">Catalyzes the methyl esterification of L-isoaspartyl residues in peptides and proteins that result from spontaneous decomposition of normal L-aspartyl and L-asparaginyl residues. It plays a role in the repair and/or degradation of damaged proteins.</text>
</comment>
<comment type="catalytic activity">
    <reaction evidence="1">
        <text>[protein]-L-isoaspartate + S-adenosyl-L-methionine = [protein]-L-isoaspartate alpha-methyl ester + S-adenosyl-L-homocysteine</text>
        <dbReference type="Rhea" id="RHEA:12705"/>
        <dbReference type="Rhea" id="RHEA-COMP:12143"/>
        <dbReference type="Rhea" id="RHEA-COMP:12144"/>
        <dbReference type="ChEBI" id="CHEBI:57856"/>
        <dbReference type="ChEBI" id="CHEBI:59789"/>
        <dbReference type="ChEBI" id="CHEBI:90596"/>
        <dbReference type="ChEBI" id="CHEBI:90598"/>
        <dbReference type="EC" id="2.1.1.77"/>
    </reaction>
</comment>
<comment type="subcellular location">
    <subcellularLocation>
        <location evidence="1">Cytoplasm</location>
    </subcellularLocation>
</comment>
<comment type="similarity">
    <text evidence="1">Belongs to the methyltransferase superfamily. L-isoaspartyl/D-aspartyl protein methyltransferase family.</text>
</comment>
<accession>Q1MRE5</accession>
<keyword id="KW-0963">Cytoplasm</keyword>
<keyword id="KW-0489">Methyltransferase</keyword>
<keyword id="KW-1185">Reference proteome</keyword>
<keyword id="KW-0949">S-adenosyl-L-methionine</keyword>
<keyword id="KW-0808">Transferase</keyword>
<name>PIMT_LAWIP</name>
<evidence type="ECO:0000255" key="1">
    <source>
        <dbReference type="HAMAP-Rule" id="MF_00090"/>
    </source>
</evidence>
<gene>
    <name evidence="1" type="primary">pcm</name>
    <name type="ordered locus">LI0375</name>
</gene>
<protein>
    <recommendedName>
        <fullName evidence="1">Protein-L-isoaspartate O-methyltransferase</fullName>
        <ecNumber evidence="1">2.1.1.77</ecNumber>
    </recommendedName>
    <alternativeName>
        <fullName evidence="1">L-isoaspartyl protein carboxyl methyltransferase</fullName>
    </alternativeName>
    <alternativeName>
        <fullName evidence="1">Protein L-isoaspartyl methyltransferase</fullName>
    </alternativeName>
    <alternativeName>
        <fullName evidence="1">Protein-beta-aspartate methyltransferase</fullName>
        <shortName evidence="1">PIMT</shortName>
    </alternativeName>
</protein>
<proteinExistence type="inferred from homology"/>
<dbReference type="EC" id="2.1.1.77" evidence="1"/>
<dbReference type="EMBL" id="AM180252">
    <property type="protein sequence ID" value="CAJ54431.1"/>
    <property type="molecule type" value="Genomic_DNA"/>
</dbReference>
<dbReference type="RefSeq" id="WP_011526460.1">
    <property type="nucleotide sequence ID" value="NC_008011.1"/>
</dbReference>
<dbReference type="SMR" id="Q1MRE5"/>
<dbReference type="STRING" id="363253.LI0375"/>
<dbReference type="KEGG" id="lip:LI0375"/>
<dbReference type="eggNOG" id="COG2518">
    <property type="taxonomic scope" value="Bacteria"/>
</dbReference>
<dbReference type="HOGENOM" id="CLU_055432_2_0_7"/>
<dbReference type="OrthoDB" id="9810066at2"/>
<dbReference type="Proteomes" id="UP000002430">
    <property type="component" value="Chromosome"/>
</dbReference>
<dbReference type="GO" id="GO:0005737">
    <property type="term" value="C:cytoplasm"/>
    <property type="evidence" value="ECO:0007669"/>
    <property type="project" value="UniProtKB-SubCell"/>
</dbReference>
<dbReference type="GO" id="GO:0004719">
    <property type="term" value="F:protein-L-isoaspartate (D-aspartate) O-methyltransferase activity"/>
    <property type="evidence" value="ECO:0007669"/>
    <property type="project" value="UniProtKB-UniRule"/>
</dbReference>
<dbReference type="GO" id="GO:0032259">
    <property type="term" value="P:methylation"/>
    <property type="evidence" value="ECO:0007669"/>
    <property type="project" value="UniProtKB-KW"/>
</dbReference>
<dbReference type="GO" id="GO:0036211">
    <property type="term" value="P:protein modification process"/>
    <property type="evidence" value="ECO:0007669"/>
    <property type="project" value="UniProtKB-UniRule"/>
</dbReference>
<dbReference type="GO" id="GO:0030091">
    <property type="term" value="P:protein repair"/>
    <property type="evidence" value="ECO:0007669"/>
    <property type="project" value="UniProtKB-UniRule"/>
</dbReference>
<dbReference type="CDD" id="cd02440">
    <property type="entry name" value="AdoMet_MTases"/>
    <property type="match status" value="1"/>
</dbReference>
<dbReference type="FunFam" id="3.40.50.150:FF:000010">
    <property type="entry name" value="Protein-L-isoaspartate O-methyltransferase"/>
    <property type="match status" value="1"/>
</dbReference>
<dbReference type="Gene3D" id="3.40.50.150">
    <property type="entry name" value="Vaccinia Virus protein VP39"/>
    <property type="match status" value="1"/>
</dbReference>
<dbReference type="HAMAP" id="MF_00090">
    <property type="entry name" value="PIMT"/>
    <property type="match status" value="1"/>
</dbReference>
<dbReference type="InterPro" id="IPR000682">
    <property type="entry name" value="PCMT"/>
</dbReference>
<dbReference type="InterPro" id="IPR029063">
    <property type="entry name" value="SAM-dependent_MTases_sf"/>
</dbReference>
<dbReference type="NCBIfam" id="TIGR00080">
    <property type="entry name" value="pimt"/>
    <property type="match status" value="1"/>
</dbReference>
<dbReference type="NCBIfam" id="NF001453">
    <property type="entry name" value="PRK00312.1"/>
    <property type="match status" value="1"/>
</dbReference>
<dbReference type="PANTHER" id="PTHR11579">
    <property type="entry name" value="PROTEIN-L-ISOASPARTATE O-METHYLTRANSFERASE"/>
    <property type="match status" value="1"/>
</dbReference>
<dbReference type="PANTHER" id="PTHR11579:SF0">
    <property type="entry name" value="PROTEIN-L-ISOASPARTATE(D-ASPARTATE) O-METHYLTRANSFERASE"/>
    <property type="match status" value="1"/>
</dbReference>
<dbReference type="Pfam" id="PF01135">
    <property type="entry name" value="PCMT"/>
    <property type="match status" value="1"/>
</dbReference>
<dbReference type="SUPFAM" id="SSF53335">
    <property type="entry name" value="S-adenosyl-L-methionine-dependent methyltransferases"/>
    <property type="match status" value="1"/>
</dbReference>
<dbReference type="PROSITE" id="PS01279">
    <property type="entry name" value="PCMT"/>
    <property type="match status" value="1"/>
</dbReference>
<organism>
    <name type="scientific">Lawsonia intracellularis (strain PHE/MN1-00)</name>
    <dbReference type="NCBI Taxonomy" id="363253"/>
    <lineage>
        <taxon>Bacteria</taxon>
        <taxon>Pseudomonadati</taxon>
        <taxon>Thermodesulfobacteriota</taxon>
        <taxon>Desulfovibrionia</taxon>
        <taxon>Desulfovibrionales</taxon>
        <taxon>Desulfovibrionaceae</taxon>
        <taxon>Lawsonia</taxon>
    </lineage>
</organism>